<sequence length="78" mass="9131">MSKVCQVTGKRRIVGHNVSHANNKTKRLFNPNLHERRFWVESENRWVRLKVSNHGLRVIDKCGIDAVLADIRKRGERV</sequence>
<dbReference type="EMBL" id="AE017282">
    <property type="protein sequence ID" value="AAU91516.1"/>
    <property type="molecule type" value="Genomic_DNA"/>
</dbReference>
<dbReference type="RefSeq" id="WP_010961567.1">
    <property type="nucleotide sequence ID" value="NC_002977.6"/>
</dbReference>
<dbReference type="SMR" id="Q605E5"/>
<dbReference type="STRING" id="243233.MCA2339"/>
<dbReference type="GeneID" id="88224543"/>
<dbReference type="KEGG" id="mca:MCA2339"/>
<dbReference type="eggNOG" id="COG0227">
    <property type="taxonomic scope" value="Bacteria"/>
</dbReference>
<dbReference type="HOGENOM" id="CLU_064548_3_1_6"/>
<dbReference type="Proteomes" id="UP000006821">
    <property type="component" value="Chromosome"/>
</dbReference>
<dbReference type="GO" id="GO:0022625">
    <property type="term" value="C:cytosolic large ribosomal subunit"/>
    <property type="evidence" value="ECO:0007669"/>
    <property type="project" value="TreeGrafter"/>
</dbReference>
<dbReference type="GO" id="GO:0003735">
    <property type="term" value="F:structural constituent of ribosome"/>
    <property type="evidence" value="ECO:0007669"/>
    <property type="project" value="InterPro"/>
</dbReference>
<dbReference type="GO" id="GO:0006412">
    <property type="term" value="P:translation"/>
    <property type="evidence" value="ECO:0007669"/>
    <property type="project" value="UniProtKB-UniRule"/>
</dbReference>
<dbReference type="FunFam" id="2.30.170.40:FF:000001">
    <property type="entry name" value="50S ribosomal protein L28"/>
    <property type="match status" value="1"/>
</dbReference>
<dbReference type="Gene3D" id="2.30.170.40">
    <property type="entry name" value="Ribosomal protein L28/L24"/>
    <property type="match status" value="1"/>
</dbReference>
<dbReference type="HAMAP" id="MF_00373">
    <property type="entry name" value="Ribosomal_bL28"/>
    <property type="match status" value="1"/>
</dbReference>
<dbReference type="InterPro" id="IPR026569">
    <property type="entry name" value="Ribosomal_bL28"/>
</dbReference>
<dbReference type="InterPro" id="IPR034704">
    <property type="entry name" value="Ribosomal_bL28/bL31-like_sf"/>
</dbReference>
<dbReference type="InterPro" id="IPR001383">
    <property type="entry name" value="Ribosomal_bL28_bact-type"/>
</dbReference>
<dbReference type="InterPro" id="IPR037147">
    <property type="entry name" value="Ribosomal_bL28_sf"/>
</dbReference>
<dbReference type="NCBIfam" id="TIGR00009">
    <property type="entry name" value="L28"/>
    <property type="match status" value="1"/>
</dbReference>
<dbReference type="PANTHER" id="PTHR13528">
    <property type="entry name" value="39S RIBOSOMAL PROTEIN L28, MITOCHONDRIAL"/>
    <property type="match status" value="1"/>
</dbReference>
<dbReference type="PANTHER" id="PTHR13528:SF2">
    <property type="entry name" value="LARGE RIBOSOMAL SUBUNIT PROTEIN BL28M"/>
    <property type="match status" value="1"/>
</dbReference>
<dbReference type="Pfam" id="PF00830">
    <property type="entry name" value="Ribosomal_L28"/>
    <property type="match status" value="1"/>
</dbReference>
<dbReference type="SUPFAM" id="SSF143800">
    <property type="entry name" value="L28p-like"/>
    <property type="match status" value="1"/>
</dbReference>
<feature type="chain" id="PRO_0000178500" description="Large ribosomal subunit protein bL28">
    <location>
        <begin position="1"/>
        <end position="78"/>
    </location>
</feature>
<reference key="1">
    <citation type="journal article" date="2004" name="PLoS Biol.">
        <title>Genomic insights into methanotrophy: the complete genome sequence of Methylococcus capsulatus (Bath).</title>
        <authorList>
            <person name="Ward N.L."/>
            <person name="Larsen O."/>
            <person name="Sakwa J."/>
            <person name="Bruseth L."/>
            <person name="Khouri H.M."/>
            <person name="Durkin A.S."/>
            <person name="Dimitrov G."/>
            <person name="Jiang L."/>
            <person name="Scanlan D."/>
            <person name="Kang K.H."/>
            <person name="Lewis M.R."/>
            <person name="Nelson K.E."/>
            <person name="Methe B.A."/>
            <person name="Wu M."/>
            <person name="Heidelberg J.F."/>
            <person name="Paulsen I.T."/>
            <person name="Fouts D.E."/>
            <person name="Ravel J."/>
            <person name="Tettelin H."/>
            <person name="Ren Q."/>
            <person name="Read T.D."/>
            <person name="DeBoy R.T."/>
            <person name="Seshadri R."/>
            <person name="Salzberg S.L."/>
            <person name="Jensen H.B."/>
            <person name="Birkeland N.K."/>
            <person name="Nelson W.C."/>
            <person name="Dodson R.J."/>
            <person name="Grindhaug S.H."/>
            <person name="Holt I.E."/>
            <person name="Eidhammer I."/>
            <person name="Jonasen I."/>
            <person name="Vanaken S."/>
            <person name="Utterback T.R."/>
            <person name="Feldblyum T.V."/>
            <person name="Fraser C.M."/>
            <person name="Lillehaug J.R."/>
            <person name="Eisen J.A."/>
        </authorList>
    </citation>
    <scope>NUCLEOTIDE SEQUENCE [LARGE SCALE GENOMIC DNA]</scope>
    <source>
        <strain>ATCC 33009 / NCIMB 11132 / Bath</strain>
    </source>
</reference>
<comment type="similarity">
    <text evidence="1">Belongs to the bacterial ribosomal protein bL28 family.</text>
</comment>
<protein>
    <recommendedName>
        <fullName evidence="1">Large ribosomal subunit protein bL28</fullName>
    </recommendedName>
    <alternativeName>
        <fullName evidence="2">50S ribosomal protein L28</fullName>
    </alternativeName>
</protein>
<gene>
    <name evidence="1" type="primary">rpmB</name>
    <name type="ordered locus">MCA2339</name>
</gene>
<name>RL28_METCA</name>
<organism>
    <name type="scientific">Methylococcus capsulatus (strain ATCC 33009 / NCIMB 11132 / Bath)</name>
    <dbReference type="NCBI Taxonomy" id="243233"/>
    <lineage>
        <taxon>Bacteria</taxon>
        <taxon>Pseudomonadati</taxon>
        <taxon>Pseudomonadota</taxon>
        <taxon>Gammaproteobacteria</taxon>
        <taxon>Methylococcales</taxon>
        <taxon>Methylococcaceae</taxon>
        <taxon>Methylococcus</taxon>
    </lineage>
</organism>
<accession>Q605E5</accession>
<proteinExistence type="inferred from homology"/>
<evidence type="ECO:0000255" key="1">
    <source>
        <dbReference type="HAMAP-Rule" id="MF_00373"/>
    </source>
</evidence>
<evidence type="ECO:0000305" key="2"/>
<keyword id="KW-1185">Reference proteome</keyword>
<keyword id="KW-0687">Ribonucleoprotein</keyword>
<keyword id="KW-0689">Ribosomal protein</keyword>